<keyword id="KW-0067">ATP-binding</keyword>
<keyword id="KW-0091">Biomineralization</keyword>
<keyword id="KW-0963">Cytoplasm</keyword>
<keyword id="KW-0206">Cytoskeleton</keyword>
<keyword id="KW-0378">Hydrolase</keyword>
<keyword id="KW-0547">Nucleotide-binding</keyword>
<gene>
    <name evidence="4" type="primary">mamK-like</name>
    <name evidence="5" type="ordered locus">amb0397.1</name>
</gene>
<comment type="function">
    <text evidence="2 3">Protein with ATPase activity which forms pole-to-pole filaments in vivo, probably with MamK. Efficient filament formation requires MamK. Probably promotes turnover of MamK filaments, by providing a monomer pool (PubMed:24957623). In vivo, in the absence of its paralog MamK, forms thin filaments from pole to pole (PubMed:20161777). In vitro forms straight filaments and bundles in the absence of ATP. Filament formation is triggered by KCl and MgCl(2); polymerizes more slowly and makes thinner filaments than MamK (PubMed:20161777). Expression in E.coli yields a filament in the cell's longitudinal axis; the protein nucleates at one pole or the cell septum (PubMed:20161777).</text>
</comment>
<comment type="catalytic activity">
    <reaction evidence="3">
        <text>ATP + H2O = ADP + phosphate + H(+)</text>
        <dbReference type="Rhea" id="RHEA:13065"/>
        <dbReference type="ChEBI" id="CHEBI:15377"/>
        <dbReference type="ChEBI" id="CHEBI:15378"/>
        <dbReference type="ChEBI" id="CHEBI:30616"/>
        <dbReference type="ChEBI" id="CHEBI:43474"/>
        <dbReference type="ChEBI" id="CHEBI:456216"/>
    </reaction>
</comment>
<comment type="biophysicochemical properties">
    <kinetics>
        <KM evidence="3">127 uM for ATP</KM>
    </kinetics>
</comment>
<comment type="subunit">
    <text evidence="2 3">Forms cytoplasmic filament polymers (PubMed:20161777, PubMed:24957623). Forms filaments with MamK (PubMed:24957623).</text>
</comment>
<comment type="subcellular location">
    <subcellularLocation>
        <location evidence="6 7">Cytoplasm</location>
    </subcellularLocation>
    <subcellularLocation>
        <location evidence="2 3">Cytoplasm</location>
        <location evidence="2 3">Cytoskeleton</location>
    </subcellularLocation>
    <text evidence="2 3">Protein forms filaments extending along most of the cell associated with its inner curvature, in the correct position to be filaments that are seen associated with magnetosomes (PubMed:20161777). Colocalizes in filaments with paralog MamK (PubMed:24957623).</text>
</comment>
<comment type="induction">
    <text evidence="2 3">Expressed during exponential phase in static growth conditions in the presence and absence of the mamK gene (PubMed:20161777). Expressed during late exponential phase in the presence and absence of the mamK gene (PubMed:24957623).</text>
</comment>
<comment type="disruption phenotype">
    <text evidence="3">About 40% reduction in magnetosome alignment; a double mamK-mamK-like deletion has a 65% reduction in magnetosome alignment. The single mamK-like deletion has no effect on MamK turnover rates.</text>
</comment>
<comment type="miscellaneous">
    <text evidence="5">This bacteria makes up to 20 cubo-octahedral magnetosomes of about 45 nm in diameter which contain membrane-bound crystals of magnetite (Fe(3)O(4)).</text>
</comment>
<comment type="miscellaneous">
    <text evidence="3">Despite the presence of Ala-141 (where Glu is expected) this protein has ATPase activity.</text>
</comment>
<comment type="miscellaneous">
    <text evidence="6">Encoded in an approximately 22 kb magnetotaxis genomic islet separate from the large magnetosome island.</text>
</comment>
<comment type="similarity">
    <text evidence="6">Belongs to the FtsA/MreB family. MamK subfamily.</text>
</comment>
<evidence type="ECO:0000250" key="1">
    <source>
        <dbReference type="UniProtKB" id="Q2W8Q6"/>
    </source>
</evidence>
<evidence type="ECO:0000269" key="2">
    <source>
    </source>
</evidence>
<evidence type="ECO:0000269" key="3">
    <source>
    </source>
</evidence>
<evidence type="ECO:0000303" key="4">
    <source>
    </source>
</evidence>
<evidence type="ECO:0000305" key="5"/>
<evidence type="ECO:0000305" key="6">
    <source>
    </source>
</evidence>
<evidence type="ECO:0000305" key="7">
    <source>
    </source>
</evidence>
<sequence>MIVNDNQNILYVGIDFGYSKTVIMTSRGKSLSLKSLVGYPKDFVGLARLGRPYLVGDEAFEMRSYLHLRNPLLDGLLNPISEQDIDVTRHFISHIIKCAEPAAGEKVFAVIGVTPRFTAANKKLLLKLAQEYCQNVLLMSAPFLAGNSIGKASGSIIIDIGAWTTDICAMKGRIPRPEDQSSIAKAGSYIDERLKNSILERYPALQINANIARMVKEQFAFVGRPQLVAACEFRSAGKAVRCDVTEQVRAACESPFAEIAERIGAVLCVVPPEDQALVLKNIVITGAGAQIRGLPEYVKSMLAPYGDARVSIANEPLMEACKGALSMAQEIPPHFWGQL</sequence>
<dbReference type="EC" id="3.6.1.-" evidence="3"/>
<dbReference type="EMBL" id="AP007255">
    <property type="status" value="NOT_ANNOTATED_CDS"/>
    <property type="molecule type" value="Genomic_DNA"/>
</dbReference>
<dbReference type="SMR" id="P0DSO6"/>
<dbReference type="OrthoDB" id="245310at2"/>
<dbReference type="Proteomes" id="UP000007058">
    <property type="component" value="Chromosome"/>
</dbReference>
<dbReference type="GO" id="GO:0005737">
    <property type="term" value="C:cytoplasm"/>
    <property type="evidence" value="ECO:0000314"/>
    <property type="project" value="UniProtKB"/>
</dbReference>
<dbReference type="GO" id="GO:0005856">
    <property type="term" value="C:cytoskeleton"/>
    <property type="evidence" value="ECO:0000314"/>
    <property type="project" value="UniProtKB"/>
</dbReference>
<dbReference type="GO" id="GO:0005524">
    <property type="term" value="F:ATP binding"/>
    <property type="evidence" value="ECO:0007669"/>
    <property type="project" value="UniProtKB-KW"/>
</dbReference>
<dbReference type="GO" id="GO:0016887">
    <property type="term" value="F:ATP hydrolysis activity"/>
    <property type="evidence" value="ECO:0007669"/>
    <property type="project" value="RHEA"/>
</dbReference>
<dbReference type="GO" id="GO:0140923">
    <property type="term" value="P:magnetosome assembly"/>
    <property type="evidence" value="ECO:0000315"/>
    <property type="project" value="UniProtKB"/>
</dbReference>
<dbReference type="Gene3D" id="3.30.420.40">
    <property type="match status" value="1"/>
</dbReference>
<dbReference type="InterPro" id="IPR043129">
    <property type="entry name" value="ATPase_NBD"/>
</dbReference>
<dbReference type="InterPro" id="IPR056546">
    <property type="entry name" value="MreB_MamK-like"/>
</dbReference>
<dbReference type="NCBIfam" id="NF040964">
    <property type="entry name" value="MamK"/>
    <property type="match status" value="1"/>
</dbReference>
<dbReference type="PANTHER" id="PTHR42749">
    <property type="entry name" value="CELL SHAPE-DETERMINING PROTEIN MREB"/>
    <property type="match status" value="1"/>
</dbReference>
<dbReference type="PANTHER" id="PTHR42749:SF1">
    <property type="entry name" value="CELL SHAPE-DETERMINING PROTEIN MREB"/>
    <property type="match status" value="1"/>
</dbReference>
<dbReference type="Pfam" id="PF06723">
    <property type="entry name" value="MreB_Mbl"/>
    <property type="match status" value="1"/>
</dbReference>
<dbReference type="SUPFAM" id="SSF53067">
    <property type="entry name" value="Actin-like ATPase domain"/>
    <property type="match status" value="2"/>
</dbReference>
<reference key="1">
    <citation type="journal article" date="2005" name="DNA Res.">
        <title>Complete genome sequence of the facultative anaerobic magnetotactic bacterium Magnetospirillum sp. strain AMB-1.</title>
        <authorList>
            <person name="Matsunaga T."/>
            <person name="Okamura Y."/>
            <person name="Fukuda Y."/>
            <person name="Wahyudi A.T."/>
            <person name="Murase Y."/>
            <person name="Takeyama H."/>
        </authorList>
    </citation>
    <scope>NUCLEOTIDE SEQUENCE [LARGE SCALE GENOMIC DNA]</scope>
    <source>
        <strain>ATCC 700264 / AMB-1</strain>
    </source>
</reference>
<reference key="2">
    <citation type="journal article" date="2010" name="PLoS ONE">
        <title>A second actin-like MamK protein in Magnetospirillum magneticum AMB-1 encoded outside the genomic magnetosome island.</title>
        <authorList>
            <person name="Rioux J.B."/>
            <person name="Philippe N."/>
            <person name="Pereira S."/>
            <person name="Pignol D."/>
            <person name="Wu L.F."/>
            <person name="Ginet N."/>
        </authorList>
    </citation>
    <scope>IDENTIFICATION</scope>
    <scope>FUNCTION</scope>
    <scope>EXPRESSION IN E.COLI</scope>
    <scope>FORMS FILAMENTS</scope>
    <scope>SUBCELLULAR LOCATION</scope>
    <scope>INDUCTION</scope>
    <source>
        <strain>ATCC 700264 / AMB-1</strain>
    </source>
</reference>
<reference key="3">
    <citation type="journal article" date="2014" name="J. Bacteriol.">
        <title>Interplay between two bacterial actin homologs, MamK and MamK-Like, is required for the alignment of magnetosome organelles in Magnetospirillum magneticum AMB-1.</title>
        <authorList>
            <person name="Abreu N."/>
            <person name="Mannoubi S."/>
            <person name="Ozyamak E."/>
            <person name="Pignol D."/>
            <person name="Ginet N."/>
            <person name="Komeili A."/>
        </authorList>
    </citation>
    <scope>FUNCTION</scope>
    <scope>ATPASE ACTIVITY</scope>
    <scope>FORMS FILAMENTS</scope>
    <scope>BIOPHYSICOCHEMICAL PROPERTIES</scope>
    <scope>INTERACTION WITH MAMK</scope>
    <scope>SUBUNIT</scope>
    <scope>SUBCELLULAR LOCATION</scope>
    <scope>INDUCTION</scope>
    <scope>DISRUPTION PHENOTYPE</scope>
    <scope>MUTAGENESIS OF ASP-15 AND ALA-141</scope>
    <source>
        <strain>ATCC 700264 / AMB-1</strain>
    </source>
</reference>
<feature type="chain" id="PRO_0000447775" description="MamK-like protein">
    <location>
        <begin position="1"/>
        <end position="339"/>
    </location>
</feature>
<feature type="binding site" evidence="1">
    <location>
        <begin position="18"/>
        <end position="19"/>
    </location>
    <ligand>
        <name>ATP</name>
        <dbReference type="ChEBI" id="CHEBI:30616"/>
    </ligand>
</feature>
<feature type="binding site" evidence="1">
    <location>
        <position position="74"/>
    </location>
    <ligand>
        <name>ATP</name>
        <dbReference type="ChEBI" id="CHEBI:30616"/>
    </ligand>
</feature>
<feature type="binding site" evidence="1">
    <location>
        <begin position="162"/>
        <end position="164"/>
    </location>
    <ligand>
        <name>ATP</name>
        <dbReference type="ChEBI" id="CHEBI:30616"/>
    </ligand>
</feature>
<feature type="binding site" evidence="1">
    <location>
        <begin position="216"/>
        <end position="220"/>
    </location>
    <ligand>
        <name>ATP</name>
        <dbReference type="ChEBI" id="CHEBI:30616"/>
    </ligand>
</feature>
<feature type="mutagenesis site" description="Loss of ATPase activity." evidence="3">
    <original>D</original>
    <variation>N</variation>
    <location>
        <position position="15"/>
    </location>
</feature>
<feature type="mutagenesis site" description="Increased ATPase activity." evidence="3">
    <original>A</original>
    <variation>E</variation>
    <location>
        <position position="141"/>
    </location>
</feature>
<organism>
    <name type="scientific">Paramagnetospirillum magneticum (strain ATCC 700264 / AMB-1)</name>
    <name type="common">Magnetospirillum magneticum</name>
    <dbReference type="NCBI Taxonomy" id="342108"/>
    <lineage>
        <taxon>Bacteria</taxon>
        <taxon>Pseudomonadati</taxon>
        <taxon>Pseudomonadota</taxon>
        <taxon>Alphaproteobacteria</taxon>
        <taxon>Rhodospirillales</taxon>
        <taxon>Magnetospirillaceae</taxon>
        <taxon>Paramagnetospirillum</taxon>
    </lineage>
</organism>
<accession>P0DSO6</accession>
<name>MAMKL_PARM1</name>
<protein>
    <recommendedName>
        <fullName evidence="4">MamK-like protein</fullName>
        <ecNumber evidence="3">3.6.1.-</ecNumber>
    </recommendedName>
    <alternativeName>
        <fullName evidence="5">Magnetosome cytoskeleton protein MamK-like</fullName>
    </alternativeName>
</protein>
<proteinExistence type="evidence at protein level"/>